<reference key="1">
    <citation type="journal article" date="2008" name="PLoS ONE">
        <title>Genome sequence of a lancefield group C Streptococcus zooepidemicus strain causing epidemic nephritis: new information about an old disease.</title>
        <authorList>
            <person name="Beres S.B."/>
            <person name="Sesso R."/>
            <person name="Pinto S.W.L."/>
            <person name="Hoe N.P."/>
            <person name="Porcella S.F."/>
            <person name="Deleo F.R."/>
            <person name="Musser J.M."/>
        </authorList>
    </citation>
    <scope>NUCLEOTIDE SEQUENCE [LARGE SCALE GENOMIC DNA]</scope>
    <source>
        <strain>MGCS10565</strain>
    </source>
</reference>
<comment type="function">
    <text evidence="1">Catalyzes the attachment of L-aspartate to tRNA(Asp) in a two-step reaction: L-aspartate is first activated by ATP to form Asp-AMP and then transferred to the acceptor end of tRNA(Asp).</text>
</comment>
<comment type="catalytic activity">
    <reaction evidence="1">
        <text>tRNA(Asp) + L-aspartate + ATP = L-aspartyl-tRNA(Asp) + AMP + diphosphate</text>
        <dbReference type="Rhea" id="RHEA:19649"/>
        <dbReference type="Rhea" id="RHEA-COMP:9660"/>
        <dbReference type="Rhea" id="RHEA-COMP:9678"/>
        <dbReference type="ChEBI" id="CHEBI:29991"/>
        <dbReference type="ChEBI" id="CHEBI:30616"/>
        <dbReference type="ChEBI" id="CHEBI:33019"/>
        <dbReference type="ChEBI" id="CHEBI:78442"/>
        <dbReference type="ChEBI" id="CHEBI:78516"/>
        <dbReference type="ChEBI" id="CHEBI:456215"/>
        <dbReference type="EC" id="6.1.1.12"/>
    </reaction>
</comment>
<comment type="subunit">
    <text evidence="1">Homodimer.</text>
</comment>
<comment type="subcellular location">
    <subcellularLocation>
        <location evidence="1">Cytoplasm</location>
    </subcellularLocation>
</comment>
<comment type="similarity">
    <text evidence="1">Belongs to the class-II aminoacyl-tRNA synthetase family. Type 1 subfamily.</text>
</comment>
<evidence type="ECO:0000255" key="1">
    <source>
        <dbReference type="HAMAP-Rule" id="MF_00044"/>
    </source>
</evidence>
<protein>
    <recommendedName>
        <fullName evidence="1">Aspartate--tRNA ligase</fullName>
        <ecNumber evidence="1">6.1.1.12</ecNumber>
    </recommendedName>
    <alternativeName>
        <fullName evidence="1">Aspartyl-tRNA synthetase</fullName>
        <shortName evidence="1">AspRS</shortName>
    </alternativeName>
</protein>
<organism>
    <name type="scientific">Streptococcus equi subsp. zooepidemicus (strain MGCS10565)</name>
    <dbReference type="NCBI Taxonomy" id="552526"/>
    <lineage>
        <taxon>Bacteria</taxon>
        <taxon>Bacillati</taxon>
        <taxon>Bacillota</taxon>
        <taxon>Bacilli</taxon>
        <taxon>Lactobacillales</taxon>
        <taxon>Streptococcaceae</taxon>
        <taxon>Streptococcus</taxon>
    </lineage>
</organism>
<dbReference type="EC" id="6.1.1.12" evidence="1"/>
<dbReference type="EMBL" id="CP001129">
    <property type="protein sequence ID" value="ACG63214.1"/>
    <property type="molecule type" value="Genomic_DNA"/>
</dbReference>
<dbReference type="RefSeq" id="WP_012516458.1">
    <property type="nucleotide sequence ID" value="NC_011134.1"/>
</dbReference>
<dbReference type="SMR" id="B4U0K5"/>
<dbReference type="KEGG" id="sez:Sez_1892"/>
<dbReference type="HOGENOM" id="CLU_014330_3_2_9"/>
<dbReference type="Proteomes" id="UP000001873">
    <property type="component" value="Chromosome"/>
</dbReference>
<dbReference type="GO" id="GO:0005737">
    <property type="term" value="C:cytoplasm"/>
    <property type="evidence" value="ECO:0007669"/>
    <property type="project" value="UniProtKB-SubCell"/>
</dbReference>
<dbReference type="GO" id="GO:0004815">
    <property type="term" value="F:aspartate-tRNA ligase activity"/>
    <property type="evidence" value="ECO:0007669"/>
    <property type="project" value="UniProtKB-UniRule"/>
</dbReference>
<dbReference type="GO" id="GO:0005524">
    <property type="term" value="F:ATP binding"/>
    <property type="evidence" value="ECO:0007669"/>
    <property type="project" value="UniProtKB-UniRule"/>
</dbReference>
<dbReference type="GO" id="GO:0140096">
    <property type="term" value="F:catalytic activity, acting on a protein"/>
    <property type="evidence" value="ECO:0007669"/>
    <property type="project" value="UniProtKB-ARBA"/>
</dbReference>
<dbReference type="GO" id="GO:0003676">
    <property type="term" value="F:nucleic acid binding"/>
    <property type="evidence" value="ECO:0007669"/>
    <property type="project" value="InterPro"/>
</dbReference>
<dbReference type="GO" id="GO:0016740">
    <property type="term" value="F:transferase activity"/>
    <property type="evidence" value="ECO:0007669"/>
    <property type="project" value="UniProtKB-ARBA"/>
</dbReference>
<dbReference type="GO" id="GO:0006422">
    <property type="term" value="P:aspartyl-tRNA aminoacylation"/>
    <property type="evidence" value="ECO:0007669"/>
    <property type="project" value="UniProtKB-UniRule"/>
</dbReference>
<dbReference type="CDD" id="cd00777">
    <property type="entry name" value="AspRS_core"/>
    <property type="match status" value="1"/>
</dbReference>
<dbReference type="CDD" id="cd04317">
    <property type="entry name" value="EcAspRS_like_N"/>
    <property type="match status" value="1"/>
</dbReference>
<dbReference type="Gene3D" id="3.30.930.10">
    <property type="entry name" value="Bira Bifunctional Protein, Domain 2"/>
    <property type="match status" value="1"/>
</dbReference>
<dbReference type="Gene3D" id="3.30.1360.30">
    <property type="entry name" value="GAD-like domain"/>
    <property type="match status" value="1"/>
</dbReference>
<dbReference type="Gene3D" id="2.40.50.140">
    <property type="entry name" value="Nucleic acid-binding proteins"/>
    <property type="match status" value="1"/>
</dbReference>
<dbReference type="HAMAP" id="MF_00044">
    <property type="entry name" value="Asp_tRNA_synth_type1"/>
    <property type="match status" value="1"/>
</dbReference>
<dbReference type="InterPro" id="IPR004364">
    <property type="entry name" value="Aa-tRNA-synt_II"/>
</dbReference>
<dbReference type="InterPro" id="IPR006195">
    <property type="entry name" value="aa-tRNA-synth_II"/>
</dbReference>
<dbReference type="InterPro" id="IPR045864">
    <property type="entry name" value="aa-tRNA-synth_II/BPL/LPL"/>
</dbReference>
<dbReference type="InterPro" id="IPR004524">
    <property type="entry name" value="Asp-tRNA-ligase_1"/>
</dbReference>
<dbReference type="InterPro" id="IPR047089">
    <property type="entry name" value="Asp-tRNA-ligase_1_N"/>
</dbReference>
<dbReference type="InterPro" id="IPR002312">
    <property type="entry name" value="Asp/Asn-tRNA-synth_IIb"/>
</dbReference>
<dbReference type="InterPro" id="IPR047090">
    <property type="entry name" value="AspRS_core"/>
</dbReference>
<dbReference type="InterPro" id="IPR004115">
    <property type="entry name" value="GAD-like_sf"/>
</dbReference>
<dbReference type="InterPro" id="IPR029351">
    <property type="entry name" value="GAD_dom"/>
</dbReference>
<dbReference type="InterPro" id="IPR012340">
    <property type="entry name" value="NA-bd_OB-fold"/>
</dbReference>
<dbReference type="InterPro" id="IPR004365">
    <property type="entry name" value="NA-bd_OB_tRNA"/>
</dbReference>
<dbReference type="NCBIfam" id="TIGR00459">
    <property type="entry name" value="aspS_bact"/>
    <property type="match status" value="1"/>
</dbReference>
<dbReference type="NCBIfam" id="NF001750">
    <property type="entry name" value="PRK00476.1"/>
    <property type="match status" value="1"/>
</dbReference>
<dbReference type="PANTHER" id="PTHR22594:SF5">
    <property type="entry name" value="ASPARTATE--TRNA LIGASE, MITOCHONDRIAL"/>
    <property type="match status" value="1"/>
</dbReference>
<dbReference type="PANTHER" id="PTHR22594">
    <property type="entry name" value="ASPARTYL/LYSYL-TRNA SYNTHETASE"/>
    <property type="match status" value="1"/>
</dbReference>
<dbReference type="Pfam" id="PF02938">
    <property type="entry name" value="GAD"/>
    <property type="match status" value="1"/>
</dbReference>
<dbReference type="Pfam" id="PF00152">
    <property type="entry name" value="tRNA-synt_2"/>
    <property type="match status" value="1"/>
</dbReference>
<dbReference type="Pfam" id="PF01336">
    <property type="entry name" value="tRNA_anti-codon"/>
    <property type="match status" value="1"/>
</dbReference>
<dbReference type="PRINTS" id="PR01042">
    <property type="entry name" value="TRNASYNTHASP"/>
</dbReference>
<dbReference type="SUPFAM" id="SSF55681">
    <property type="entry name" value="Class II aaRS and biotin synthetases"/>
    <property type="match status" value="1"/>
</dbReference>
<dbReference type="SUPFAM" id="SSF55261">
    <property type="entry name" value="GAD domain-like"/>
    <property type="match status" value="1"/>
</dbReference>
<dbReference type="SUPFAM" id="SSF50249">
    <property type="entry name" value="Nucleic acid-binding proteins"/>
    <property type="match status" value="1"/>
</dbReference>
<dbReference type="PROSITE" id="PS50862">
    <property type="entry name" value="AA_TRNA_LIGASE_II"/>
    <property type="match status" value="1"/>
</dbReference>
<accession>B4U0K5</accession>
<feature type="chain" id="PRO_1000091045" description="Aspartate--tRNA ligase">
    <location>
        <begin position="1"/>
        <end position="582"/>
    </location>
</feature>
<feature type="region of interest" description="Aspartate" evidence="1">
    <location>
        <begin position="198"/>
        <end position="201"/>
    </location>
</feature>
<feature type="binding site" evidence="1">
    <location>
        <position position="174"/>
    </location>
    <ligand>
        <name>L-aspartate</name>
        <dbReference type="ChEBI" id="CHEBI:29991"/>
    </ligand>
</feature>
<feature type="binding site" evidence="1">
    <location>
        <begin position="220"/>
        <end position="222"/>
    </location>
    <ligand>
        <name>ATP</name>
        <dbReference type="ChEBI" id="CHEBI:30616"/>
    </ligand>
</feature>
<feature type="binding site" evidence="1">
    <location>
        <position position="220"/>
    </location>
    <ligand>
        <name>L-aspartate</name>
        <dbReference type="ChEBI" id="CHEBI:29991"/>
    </ligand>
</feature>
<feature type="binding site" evidence="1">
    <location>
        <position position="229"/>
    </location>
    <ligand>
        <name>ATP</name>
        <dbReference type="ChEBI" id="CHEBI:30616"/>
    </ligand>
</feature>
<feature type="binding site" evidence="1">
    <location>
        <position position="443"/>
    </location>
    <ligand>
        <name>L-aspartate</name>
        <dbReference type="ChEBI" id="CHEBI:29991"/>
    </ligand>
</feature>
<feature type="binding site" evidence="1">
    <location>
        <position position="477"/>
    </location>
    <ligand>
        <name>ATP</name>
        <dbReference type="ChEBI" id="CHEBI:30616"/>
    </ligand>
</feature>
<feature type="binding site" evidence="1">
    <location>
        <position position="484"/>
    </location>
    <ligand>
        <name>L-aspartate</name>
        <dbReference type="ChEBI" id="CHEBI:29991"/>
    </ligand>
</feature>
<feature type="binding site" evidence="1">
    <location>
        <begin position="529"/>
        <end position="532"/>
    </location>
    <ligand>
        <name>ATP</name>
        <dbReference type="ChEBI" id="CHEBI:30616"/>
    </ligand>
</feature>
<name>SYD_STREM</name>
<proteinExistence type="inferred from homology"/>
<sequence>MKRSMYAGHVREEHIGRTIVLKGWVSRRRDLGGLIFIDLRDREGVMQLVINPEDVSGDVMATAERLRSEYVIEVEGSVEARQQANDKLATGAVELKVSGLTILNTAKTTPFEIKDGVEVSDDMRLRYRYLDLRRPEMLESFKLRAKTTHVIRNYLDNLGFIDVETPMLTKSTPEGARDYLVPSRISQGHFYALPQSPQITKQLLMNAGFDRYYQIVKCFRDEDLRGDRQPEFTQVDLETSFLSEQEIQDIVEGMIAKVMKDTKGIEVKLPFPRMAYDDAMNHYGSDKPDTRFDMLLQDLTDLVKEVDFKVFSEAQAVKAIVVKGHADDYSRKDIDKLTEFAKQFGAKGLAWLKVVDGAFTGPIAKFLTGVESKLTESLQLEHNDLVLFVADTLEVANNTLGTLRTRIAKELDMIDMSQFHFLWVVDWPMFEWSEEEERYMSAHHPFTLPTQESAHELEGDLAKVRAVAYDIVLNGYELGGGSLRINQKDMQERMFKALGFTKEEASDQFGFLLEAMEYGFPPHGGLAIGLDRLVMLLAGKDNIREVIAFPKNNKASDPMTQAPSLVSEKQLEELQLQIEHHD</sequence>
<gene>
    <name evidence="1" type="primary">aspS</name>
    <name type="ordered locus">Sez_1892</name>
</gene>
<keyword id="KW-0030">Aminoacyl-tRNA synthetase</keyword>
<keyword id="KW-0067">ATP-binding</keyword>
<keyword id="KW-0963">Cytoplasm</keyword>
<keyword id="KW-0436">Ligase</keyword>
<keyword id="KW-0547">Nucleotide-binding</keyword>
<keyword id="KW-0648">Protein biosynthesis</keyword>